<proteinExistence type="evidence at protein level"/>
<gene>
    <name type="primary">Rell2</name>
</gene>
<protein>
    <recommendedName>
        <fullName>RELT-like protein 2</fullName>
    </recommendedName>
</protein>
<name>RELL2_MOUSE</name>
<dbReference type="EMBL" id="AK044097">
    <property type="protein sequence ID" value="BAC31774.1"/>
    <property type="molecule type" value="mRNA"/>
</dbReference>
<dbReference type="CCDS" id="CCDS29195.2"/>
<dbReference type="RefSeq" id="NP_722488.2">
    <property type="nucleotide sequence ID" value="NM_153793.2"/>
</dbReference>
<dbReference type="RefSeq" id="XP_006525925.1">
    <property type="nucleotide sequence ID" value="XM_006525862.2"/>
</dbReference>
<dbReference type="SMR" id="Q8BRJ3"/>
<dbReference type="BioGRID" id="230391">
    <property type="interactions" value="1"/>
</dbReference>
<dbReference type="FunCoup" id="Q8BRJ3">
    <property type="interactions" value="422"/>
</dbReference>
<dbReference type="STRING" id="10090.ENSMUSP00000135556"/>
<dbReference type="GlyGen" id="Q8BRJ3">
    <property type="glycosylation" value="2 sites, 1 O-linked glycan (2 sites)"/>
</dbReference>
<dbReference type="iPTMnet" id="Q8BRJ3"/>
<dbReference type="PhosphoSitePlus" id="Q8BRJ3"/>
<dbReference type="SwissPalm" id="Q8BRJ3"/>
<dbReference type="PaxDb" id="10090-ENSMUSP00000070280"/>
<dbReference type="ProteomicsDB" id="253204"/>
<dbReference type="Antibodypedia" id="53224">
    <property type="antibodies" value="61 antibodies from 14 providers"/>
</dbReference>
<dbReference type="Ensembl" id="ENSMUST00000070709.9">
    <property type="protein sequence ID" value="ENSMUSP00000070280.3"/>
    <property type="gene ID" value="ENSMUSG00000044024.17"/>
</dbReference>
<dbReference type="Ensembl" id="ENSMUST00000176104.8">
    <property type="protein sequence ID" value="ENSMUSP00000135556.2"/>
    <property type="gene ID" value="ENSMUSG00000044024.17"/>
</dbReference>
<dbReference type="Ensembl" id="ENSMUST00000177058.8">
    <property type="protein sequence ID" value="ENSMUSP00000135615.2"/>
    <property type="gene ID" value="ENSMUSG00000044024.17"/>
</dbReference>
<dbReference type="GeneID" id="225392"/>
<dbReference type="KEGG" id="mmu:225392"/>
<dbReference type="UCSC" id="uc008ern.2">
    <property type="organism name" value="mouse"/>
</dbReference>
<dbReference type="AGR" id="MGI:1918044"/>
<dbReference type="CTD" id="285613"/>
<dbReference type="MGI" id="MGI:1918044">
    <property type="gene designation" value="Rell2"/>
</dbReference>
<dbReference type="VEuPathDB" id="HostDB:ENSMUSG00000044024"/>
<dbReference type="eggNOG" id="ENOG502RZW4">
    <property type="taxonomic scope" value="Eukaryota"/>
</dbReference>
<dbReference type="GeneTree" id="ENSGT00940000160541"/>
<dbReference type="InParanoid" id="Q8BRJ3"/>
<dbReference type="OMA" id="IPCAHEG"/>
<dbReference type="OrthoDB" id="9353106at2759"/>
<dbReference type="PhylomeDB" id="Q8BRJ3"/>
<dbReference type="TreeFam" id="TF332339"/>
<dbReference type="BioGRID-ORCS" id="225392">
    <property type="hits" value="5 hits in 79 CRISPR screens"/>
</dbReference>
<dbReference type="PRO" id="PR:Q8BRJ3"/>
<dbReference type="Proteomes" id="UP000000589">
    <property type="component" value="Chromosome 18"/>
</dbReference>
<dbReference type="RNAct" id="Q8BRJ3">
    <property type="molecule type" value="protein"/>
</dbReference>
<dbReference type="Bgee" id="ENSMUSG00000044024">
    <property type="expression patterns" value="Expressed in primary visual cortex and 112 other cell types or tissues"/>
</dbReference>
<dbReference type="ExpressionAtlas" id="Q8BRJ3">
    <property type="expression patterns" value="baseline and differential"/>
</dbReference>
<dbReference type="GO" id="GO:0005604">
    <property type="term" value="C:basement membrane"/>
    <property type="evidence" value="ECO:0000314"/>
    <property type="project" value="MGI"/>
</dbReference>
<dbReference type="GO" id="GO:0031012">
    <property type="term" value="C:extracellular matrix"/>
    <property type="evidence" value="ECO:0000314"/>
    <property type="project" value="MGI"/>
</dbReference>
<dbReference type="GO" id="GO:0005886">
    <property type="term" value="C:plasma membrane"/>
    <property type="evidence" value="ECO:0007669"/>
    <property type="project" value="UniProtKB-SubCell"/>
</dbReference>
<dbReference type="GO" id="GO:0005518">
    <property type="term" value="F:collagen binding"/>
    <property type="evidence" value="ECO:0000314"/>
    <property type="project" value="MGI"/>
</dbReference>
<dbReference type="GO" id="GO:0010811">
    <property type="term" value="P:positive regulation of cell-substrate adhesion"/>
    <property type="evidence" value="ECO:0000314"/>
    <property type="project" value="MGI"/>
</dbReference>
<dbReference type="GO" id="GO:1900745">
    <property type="term" value="P:positive regulation of p38MAPK cascade"/>
    <property type="evidence" value="ECO:0000250"/>
    <property type="project" value="UniProtKB"/>
</dbReference>
<dbReference type="InterPro" id="IPR042313">
    <property type="entry name" value="RELL2"/>
</dbReference>
<dbReference type="InterPro" id="IPR022248">
    <property type="entry name" value="TNF_rcpt_RELT"/>
</dbReference>
<dbReference type="PANTHER" id="PTHR31481:SF0">
    <property type="entry name" value="RELT-LIKE PROTEIN 2"/>
    <property type="match status" value="1"/>
</dbReference>
<dbReference type="PANTHER" id="PTHR31481">
    <property type="entry name" value="RELT-LIKE PROTEIN 2 RELL2"/>
    <property type="match status" value="1"/>
</dbReference>
<dbReference type="Pfam" id="PF12606">
    <property type="entry name" value="RELT"/>
    <property type="match status" value="1"/>
</dbReference>
<accession>Q8BRJ3</accession>
<feature type="chain" id="PRO_0000249846" description="RELT-like protein 2">
    <location>
        <begin position="1"/>
        <end position="303"/>
    </location>
</feature>
<feature type="transmembrane region" description="Helical" evidence="2">
    <location>
        <begin position="15"/>
        <end position="35"/>
    </location>
</feature>
<feature type="region of interest" description="Disordered" evidence="3">
    <location>
        <begin position="47"/>
        <end position="68"/>
    </location>
</feature>
<feature type="region of interest" description="Disordered" evidence="3">
    <location>
        <begin position="135"/>
        <end position="214"/>
    </location>
</feature>
<feature type="region of interest" description="Disordered" evidence="3">
    <location>
        <begin position="249"/>
        <end position="303"/>
    </location>
</feature>
<feature type="compositionally biased region" description="Basic and acidic residues" evidence="3">
    <location>
        <begin position="148"/>
        <end position="158"/>
    </location>
</feature>
<feature type="compositionally biased region" description="Basic and acidic residues" evidence="3">
    <location>
        <begin position="172"/>
        <end position="188"/>
    </location>
</feature>
<feature type="compositionally biased region" description="Gly residues" evidence="3">
    <location>
        <begin position="194"/>
        <end position="212"/>
    </location>
</feature>
<feature type="compositionally biased region" description="Polar residues" evidence="3">
    <location>
        <begin position="274"/>
        <end position="295"/>
    </location>
</feature>
<feature type="modified residue" description="Phosphoserine" evidence="5">
    <location>
        <position position="52"/>
    </location>
</feature>
<keyword id="KW-1003">Cell membrane</keyword>
<keyword id="KW-0472">Membrane</keyword>
<keyword id="KW-0597">Phosphoprotein</keyword>
<keyword id="KW-1185">Reference proteome</keyword>
<keyword id="KW-0812">Transmembrane</keyword>
<keyword id="KW-1133">Transmembrane helix</keyword>
<reference key="1">
    <citation type="journal article" date="2005" name="Science">
        <title>The transcriptional landscape of the mammalian genome.</title>
        <authorList>
            <person name="Carninci P."/>
            <person name="Kasukawa T."/>
            <person name="Katayama S."/>
            <person name="Gough J."/>
            <person name="Frith M.C."/>
            <person name="Maeda N."/>
            <person name="Oyama R."/>
            <person name="Ravasi T."/>
            <person name="Lenhard B."/>
            <person name="Wells C."/>
            <person name="Kodzius R."/>
            <person name="Shimokawa K."/>
            <person name="Bajic V.B."/>
            <person name="Brenner S.E."/>
            <person name="Batalov S."/>
            <person name="Forrest A.R."/>
            <person name="Zavolan M."/>
            <person name="Davis M.J."/>
            <person name="Wilming L.G."/>
            <person name="Aidinis V."/>
            <person name="Allen J.E."/>
            <person name="Ambesi-Impiombato A."/>
            <person name="Apweiler R."/>
            <person name="Aturaliya R.N."/>
            <person name="Bailey T.L."/>
            <person name="Bansal M."/>
            <person name="Baxter L."/>
            <person name="Beisel K.W."/>
            <person name="Bersano T."/>
            <person name="Bono H."/>
            <person name="Chalk A.M."/>
            <person name="Chiu K.P."/>
            <person name="Choudhary V."/>
            <person name="Christoffels A."/>
            <person name="Clutterbuck D.R."/>
            <person name="Crowe M.L."/>
            <person name="Dalla E."/>
            <person name="Dalrymple B.P."/>
            <person name="de Bono B."/>
            <person name="Della Gatta G."/>
            <person name="di Bernardo D."/>
            <person name="Down T."/>
            <person name="Engstrom P."/>
            <person name="Fagiolini M."/>
            <person name="Faulkner G."/>
            <person name="Fletcher C.F."/>
            <person name="Fukushima T."/>
            <person name="Furuno M."/>
            <person name="Futaki S."/>
            <person name="Gariboldi M."/>
            <person name="Georgii-Hemming P."/>
            <person name="Gingeras T.R."/>
            <person name="Gojobori T."/>
            <person name="Green R.E."/>
            <person name="Gustincich S."/>
            <person name="Harbers M."/>
            <person name="Hayashi Y."/>
            <person name="Hensch T.K."/>
            <person name="Hirokawa N."/>
            <person name="Hill D."/>
            <person name="Huminiecki L."/>
            <person name="Iacono M."/>
            <person name="Ikeo K."/>
            <person name="Iwama A."/>
            <person name="Ishikawa T."/>
            <person name="Jakt M."/>
            <person name="Kanapin A."/>
            <person name="Katoh M."/>
            <person name="Kawasawa Y."/>
            <person name="Kelso J."/>
            <person name="Kitamura H."/>
            <person name="Kitano H."/>
            <person name="Kollias G."/>
            <person name="Krishnan S.P."/>
            <person name="Kruger A."/>
            <person name="Kummerfeld S.K."/>
            <person name="Kurochkin I.V."/>
            <person name="Lareau L.F."/>
            <person name="Lazarevic D."/>
            <person name="Lipovich L."/>
            <person name="Liu J."/>
            <person name="Liuni S."/>
            <person name="McWilliam S."/>
            <person name="Madan Babu M."/>
            <person name="Madera M."/>
            <person name="Marchionni L."/>
            <person name="Matsuda H."/>
            <person name="Matsuzawa S."/>
            <person name="Miki H."/>
            <person name="Mignone F."/>
            <person name="Miyake S."/>
            <person name="Morris K."/>
            <person name="Mottagui-Tabar S."/>
            <person name="Mulder N."/>
            <person name="Nakano N."/>
            <person name="Nakauchi H."/>
            <person name="Ng P."/>
            <person name="Nilsson R."/>
            <person name="Nishiguchi S."/>
            <person name="Nishikawa S."/>
            <person name="Nori F."/>
            <person name="Ohara O."/>
            <person name="Okazaki Y."/>
            <person name="Orlando V."/>
            <person name="Pang K.C."/>
            <person name="Pavan W.J."/>
            <person name="Pavesi G."/>
            <person name="Pesole G."/>
            <person name="Petrovsky N."/>
            <person name="Piazza S."/>
            <person name="Reed J."/>
            <person name="Reid J.F."/>
            <person name="Ring B.Z."/>
            <person name="Ringwald M."/>
            <person name="Rost B."/>
            <person name="Ruan Y."/>
            <person name="Salzberg S.L."/>
            <person name="Sandelin A."/>
            <person name="Schneider C."/>
            <person name="Schoenbach C."/>
            <person name="Sekiguchi K."/>
            <person name="Semple C.A."/>
            <person name="Seno S."/>
            <person name="Sessa L."/>
            <person name="Sheng Y."/>
            <person name="Shibata Y."/>
            <person name="Shimada H."/>
            <person name="Shimada K."/>
            <person name="Silva D."/>
            <person name="Sinclair B."/>
            <person name="Sperling S."/>
            <person name="Stupka E."/>
            <person name="Sugiura K."/>
            <person name="Sultana R."/>
            <person name="Takenaka Y."/>
            <person name="Taki K."/>
            <person name="Tammoja K."/>
            <person name="Tan S.L."/>
            <person name="Tang S."/>
            <person name="Taylor M.S."/>
            <person name="Tegner J."/>
            <person name="Teichmann S.A."/>
            <person name="Ueda H.R."/>
            <person name="van Nimwegen E."/>
            <person name="Verardo R."/>
            <person name="Wei C.L."/>
            <person name="Yagi K."/>
            <person name="Yamanishi H."/>
            <person name="Zabarovsky E."/>
            <person name="Zhu S."/>
            <person name="Zimmer A."/>
            <person name="Hide W."/>
            <person name="Bult C."/>
            <person name="Grimmond S.M."/>
            <person name="Teasdale R.D."/>
            <person name="Liu E.T."/>
            <person name="Brusic V."/>
            <person name="Quackenbush J."/>
            <person name="Wahlestedt C."/>
            <person name="Mattick J.S."/>
            <person name="Hume D.A."/>
            <person name="Kai C."/>
            <person name="Sasaki D."/>
            <person name="Tomaru Y."/>
            <person name="Fukuda S."/>
            <person name="Kanamori-Katayama M."/>
            <person name="Suzuki M."/>
            <person name="Aoki J."/>
            <person name="Arakawa T."/>
            <person name="Iida J."/>
            <person name="Imamura K."/>
            <person name="Itoh M."/>
            <person name="Kato T."/>
            <person name="Kawaji H."/>
            <person name="Kawagashira N."/>
            <person name="Kawashima T."/>
            <person name="Kojima M."/>
            <person name="Kondo S."/>
            <person name="Konno H."/>
            <person name="Nakano K."/>
            <person name="Ninomiya N."/>
            <person name="Nishio T."/>
            <person name="Okada M."/>
            <person name="Plessy C."/>
            <person name="Shibata K."/>
            <person name="Shiraki T."/>
            <person name="Suzuki S."/>
            <person name="Tagami M."/>
            <person name="Waki K."/>
            <person name="Watahiki A."/>
            <person name="Okamura-Oho Y."/>
            <person name="Suzuki H."/>
            <person name="Kawai J."/>
            <person name="Hayashizaki Y."/>
        </authorList>
    </citation>
    <scope>NUCLEOTIDE SEQUENCE [LARGE SCALE MRNA]</scope>
    <source>
        <strain>C57BL/6J</strain>
        <tissue>Brain cortex</tissue>
    </source>
</reference>
<reference key="2">
    <citation type="journal article" date="2010" name="Cell">
        <title>A tissue-specific atlas of mouse protein phosphorylation and expression.</title>
        <authorList>
            <person name="Huttlin E.L."/>
            <person name="Jedrychowski M.P."/>
            <person name="Elias J.E."/>
            <person name="Goswami T."/>
            <person name="Rad R."/>
            <person name="Beausoleil S.A."/>
            <person name="Villen J."/>
            <person name="Haas W."/>
            <person name="Sowa M.E."/>
            <person name="Gygi S.P."/>
        </authorList>
    </citation>
    <scope>PHOSPHORYLATION [LARGE SCALE ANALYSIS] AT SER-52</scope>
    <scope>IDENTIFICATION BY MASS SPECTROMETRY [LARGE SCALE ANALYSIS]</scope>
    <source>
        <tissue>Brain</tissue>
    </source>
</reference>
<evidence type="ECO:0000250" key="1">
    <source>
        <dbReference type="UniProtKB" id="Q8NC24"/>
    </source>
</evidence>
<evidence type="ECO:0000255" key="2"/>
<evidence type="ECO:0000256" key="3">
    <source>
        <dbReference type="SAM" id="MobiDB-lite"/>
    </source>
</evidence>
<evidence type="ECO:0000305" key="4"/>
<evidence type="ECO:0007744" key="5">
    <source>
    </source>
</evidence>
<comment type="function">
    <text evidence="1">Induces activation of MAPK14/p38 cascade, when overexpressed. Induces apoptosis, when overexpressed.</text>
</comment>
<comment type="subunit">
    <text evidence="1">Interacts with RELT, RELL1, OXSR1, PLSCR1 and TRAF2.</text>
</comment>
<comment type="subcellular location">
    <subcellularLocation>
        <location evidence="1">Cell membrane</location>
        <topology evidence="1">Single-pass membrane protein</topology>
    </subcellularLocation>
</comment>
<comment type="similarity">
    <text evidence="4">Belongs to the RELT family.</text>
</comment>
<organism>
    <name type="scientific">Mus musculus</name>
    <name type="common">Mouse</name>
    <dbReference type="NCBI Taxonomy" id="10090"/>
    <lineage>
        <taxon>Eukaryota</taxon>
        <taxon>Metazoa</taxon>
        <taxon>Chordata</taxon>
        <taxon>Craniata</taxon>
        <taxon>Vertebrata</taxon>
        <taxon>Euteleostomi</taxon>
        <taxon>Mammalia</taxon>
        <taxon>Eutheria</taxon>
        <taxon>Euarchontoglires</taxon>
        <taxon>Glires</taxon>
        <taxon>Rodentia</taxon>
        <taxon>Myomorpha</taxon>
        <taxon>Muroidea</taxon>
        <taxon>Muridae</taxon>
        <taxon>Murinae</taxon>
        <taxon>Mus</taxon>
        <taxon>Mus</taxon>
    </lineage>
</organism>
<sequence length="303" mass="32326">MSEPQPDLEPPQHGLYMLFLLVLVFFLMGLVGFMICHVLKKKGYRCRTSRGSEPDDAQLQPPEDDDVNEDTVERIVRCIIQNEANAEALKEMLGDSEGEGTVQLSSVDATSSLQDGAPSHHHTVHLGSAAPCIHCSRSKRPPLVRQGRSKEGKSRPRPGETTVFSVGRFRVTHIEKRYGLHEHRDGSPTDRSWGSGGGQEPGGSQAAGGGQPRTGTAAIERLLPEPPPSQAAATHSVQNGRLQDASLVPCTLEGTPGTSAELNLGPRGRDPSPGLSSQEANGQPTKLDTSGQQESLPPEAGGM</sequence>